<reference evidence="8 9" key="1">
    <citation type="journal article" date="1995" name="Dev. Biol.">
        <title>A novel TGF-beta-like gene, fugacin, specifically expressed in the Spemann organizer of Xenopus.</title>
        <authorList>
            <person name="Ecochard V."/>
            <person name="Cayrol C."/>
            <person name="Foulquier F."/>
            <person name="Zaraisky A."/>
            <person name="Duprat A.-M."/>
        </authorList>
    </citation>
    <scope>NUCLEOTIDE SEQUENCE [MRNA]</scope>
    <scope>TISSUE SPECIFICITY</scope>
    <source>
        <tissue evidence="7">Blastopore lip</tissue>
        <tissue evidence="9">Gastrula</tissue>
    </source>
</reference>
<keyword id="KW-0165">Cleavage on pair of basic residues</keyword>
<keyword id="KW-0217">Developmental protein</keyword>
<keyword id="KW-1015">Disulfide bond</keyword>
<keyword id="KW-0306">Gastrulation</keyword>
<keyword id="KW-0325">Glycoprotein</keyword>
<keyword id="KW-0339">Growth factor</keyword>
<keyword id="KW-1185">Reference proteome</keyword>
<keyword id="KW-0964">Secreted</keyword>
<keyword id="KW-0732">Signal</keyword>
<name>NOD3B_XENLA</name>
<gene>
    <name type="primary">nodal3-b</name>
    <name evidence="9" type="synonym">fug</name>
</gene>
<proteinExistence type="evidence at transcript level"/>
<sequence length="401" mass="46044">MALLNLFFCLVFSSPLMAMPPVLQGRKSMSPDSILKDTSTDDGARDFQGRKFPQFMMQLYQNIIRGRDKDLSNLEHPTLQESDTVQSFITKSYTTVGNHWTLFFDMSSISRSNELKLAELRFSLPSFRKSHSVTVDIYHTNDGKEKLFMGSFKTKPSAALDADCKVFNLTILLQNFLTRGKRLIKDEYIQAKGLHLKDLEKSATEKGTENVDTLKQDQYHVSDFAAERIMLVVFAKEQSHAKSDPPSLGKKLFPSKYGIDDNANKVNGFRRLRRNKKEKTQIHVSTGPPKPIEEIKPKCKKVDMFVDFQKIGWGSWIVYPKAYNAYRCESTCAVPLNETENATNHSYIKSLLPLSDMERKECPSCVPVKMMSMSMLYYENEDFILRHHEEMIVEECGFKDM</sequence>
<evidence type="ECO:0000250" key="1"/>
<evidence type="ECO:0000250" key="2">
    <source>
        <dbReference type="UniProtKB" id="P43021"/>
    </source>
</evidence>
<evidence type="ECO:0000250" key="3">
    <source>
        <dbReference type="UniProtKB" id="Q800C0"/>
    </source>
</evidence>
<evidence type="ECO:0000250" key="4">
    <source>
        <dbReference type="UniProtKB" id="Q91609"/>
    </source>
</evidence>
<evidence type="ECO:0000250" key="5">
    <source>
        <dbReference type="UniProtKB" id="Q91620"/>
    </source>
</evidence>
<evidence type="ECO:0000255" key="6"/>
<evidence type="ECO:0000269" key="7">
    <source>
    </source>
</evidence>
<evidence type="ECO:0000305" key="8"/>
<evidence type="ECO:0000312" key="9">
    <source>
        <dbReference type="EMBL" id="AAC59735.1"/>
    </source>
</evidence>
<organism>
    <name type="scientific">Xenopus laevis</name>
    <name type="common">African clawed frog</name>
    <dbReference type="NCBI Taxonomy" id="8355"/>
    <lineage>
        <taxon>Eukaryota</taxon>
        <taxon>Metazoa</taxon>
        <taxon>Chordata</taxon>
        <taxon>Craniata</taxon>
        <taxon>Vertebrata</taxon>
        <taxon>Euteleostomi</taxon>
        <taxon>Amphibia</taxon>
        <taxon>Batrachia</taxon>
        <taxon>Anura</taxon>
        <taxon>Pipoidea</taxon>
        <taxon>Pipidae</taxon>
        <taxon>Xenopodinae</taxon>
        <taxon>Xenopus</taxon>
        <taxon>Xenopus</taxon>
    </lineage>
</organism>
<dbReference type="EMBL" id="U29588">
    <property type="protein sequence ID" value="AAC59735.1"/>
    <property type="status" value="ALT_FRAME"/>
    <property type="molecule type" value="mRNA"/>
</dbReference>
<dbReference type="RefSeq" id="NP_001079065.1">
    <property type="nucleotide sequence ID" value="NM_001085596.1"/>
</dbReference>
<dbReference type="GlyCosmos" id="Q91621">
    <property type="glycosylation" value="4 sites, No reported glycans"/>
</dbReference>
<dbReference type="GeneID" id="373597"/>
<dbReference type="KEGG" id="xla:373597"/>
<dbReference type="AGR" id="Xenbase:XB-GENE-864903"/>
<dbReference type="CTD" id="373597"/>
<dbReference type="Xenbase" id="XB-GENE-864903">
    <property type="gene designation" value="nodal3.2.L"/>
</dbReference>
<dbReference type="OrthoDB" id="5949851at2759"/>
<dbReference type="Proteomes" id="UP000186698">
    <property type="component" value="Chromosome 3L"/>
</dbReference>
<dbReference type="Bgee" id="373597">
    <property type="expression patterns" value="Expressed in blastula and 1 other cell type or tissue"/>
</dbReference>
<dbReference type="GO" id="GO:0005615">
    <property type="term" value="C:extracellular space"/>
    <property type="evidence" value="ECO:0000318"/>
    <property type="project" value="GO_Central"/>
</dbReference>
<dbReference type="GO" id="GO:0005125">
    <property type="term" value="F:cytokine activity"/>
    <property type="evidence" value="ECO:0000318"/>
    <property type="project" value="GO_Central"/>
</dbReference>
<dbReference type="GO" id="GO:0008083">
    <property type="term" value="F:growth factor activity"/>
    <property type="evidence" value="ECO:0007669"/>
    <property type="project" value="UniProtKB-KW"/>
</dbReference>
<dbReference type="GO" id="GO:0007369">
    <property type="term" value="P:gastrulation"/>
    <property type="evidence" value="ECO:0007669"/>
    <property type="project" value="UniProtKB-KW"/>
</dbReference>
<dbReference type="FunFam" id="2.10.90.10:FF:000026">
    <property type="entry name" value="Nodal homolog 3-A"/>
    <property type="match status" value="1"/>
</dbReference>
<dbReference type="Gene3D" id="2.60.120.970">
    <property type="match status" value="1"/>
</dbReference>
<dbReference type="Gene3D" id="2.10.90.10">
    <property type="entry name" value="Cystine-knot cytokines"/>
    <property type="match status" value="1"/>
</dbReference>
<dbReference type="InterPro" id="IPR029034">
    <property type="entry name" value="Cystine-knot_cytokine"/>
</dbReference>
<dbReference type="InterPro" id="IPR001839">
    <property type="entry name" value="TGF-b_C"/>
</dbReference>
<dbReference type="InterPro" id="IPR001111">
    <property type="entry name" value="TGF-b_propeptide"/>
</dbReference>
<dbReference type="InterPro" id="IPR015615">
    <property type="entry name" value="TGF-beta-rel"/>
</dbReference>
<dbReference type="PANTHER" id="PTHR11848:SF295">
    <property type="entry name" value="NODAL HOMOLOG 3-C"/>
    <property type="match status" value="1"/>
</dbReference>
<dbReference type="PANTHER" id="PTHR11848">
    <property type="entry name" value="TGF-BETA FAMILY"/>
    <property type="match status" value="1"/>
</dbReference>
<dbReference type="Pfam" id="PF00019">
    <property type="entry name" value="TGF_beta"/>
    <property type="match status" value="1"/>
</dbReference>
<dbReference type="Pfam" id="PF00688">
    <property type="entry name" value="TGFb_propeptide"/>
    <property type="match status" value="1"/>
</dbReference>
<dbReference type="SMART" id="SM00204">
    <property type="entry name" value="TGFB"/>
    <property type="match status" value="1"/>
</dbReference>
<dbReference type="SUPFAM" id="SSF57501">
    <property type="entry name" value="Cystine-knot cytokines"/>
    <property type="match status" value="1"/>
</dbReference>
<dbReference type="PROSITE" id="PS51362">
    <property type="entry name" value="TGF_BETA_2"/>
    <property type="match status" value="1"/>
</dbReference>
<accession>Q91621</accession>
<feature type="signal peptide" evidence="6">
    <location>
        <begin position="1"/>
        <end position="18"/>
    </location>
</feature>
<feature type="propeptide" id="PRO_0000338452" evidence="6">
    <location>
        <begin position="19"/>
        <end position="274"/>
    </location>
</feature>
<feature type="chain" id="PRO_0000338453" description="Nodal homolog 3-B" evidence="6">
    <location>
        <begin position="275"/>
        <end position="401"/>
    </location>
</feature>
<feature type="glycosylation site" description="N-linked (GlcNAc...) asparagine" evidence="6">
    <location>
        <position position="168"/>
    </location>
</feature>
<feature type="glycosylation site" description="N-linked (GlcNAc...) asparagine" evidence="6">
    <location>
        <position position="337"/>
    </location>
</feature>
<feature type="glycosylation site" description="N-linked (GlcNAc...) asparagine" evidence="6">
    <location>
        <position position="341"/>
    </location>
</feature>
<feature type="glycosylation site" description="N-linked (GlcNAc...) asparagine" evidence="6">
    <location>
        <position position="344"/>
    </location>
</feature>
<feature type="disulfide bond" evidence="2">
    <location>
        <begin position="299"/>
        <end position="365"/>
    </location>
</feature>
<feature type="disulfide bond" evidence="2">
    <location>
        <begin position="328"/>
        <end position="396"/>
    </location>
</feature>
<feature type="sequence conflict" description="In Ref. 1; AAC59735." evidence="8" ref="1">
    <original>TT</original>
    <variation>IY</variation>
    <location>
        <begin position="94"/>
        <end position="95"/>
    </location>
</feature>
<comment type="function">
    <text evidence="3 4">Exhibits mesoderm-dorsalizing activity and neural-inducing activity, but lacks mesoderm-inducing activity. Regulates the expression of specific mesodermal and neural genes. Induces convergent extension movements at the embryonic midline by activating the fgf signaling pathway to induce t/bra expression in the organizer region. Acts with wnt11 to induce Spemann organizer cells and induce axis formation. The unprocessed protein antagonizes bmp-signaling (By similarity).</text>
</comment>
<comment type="subunit">
    <text evidence="1">Monomer. The propeptide region interacts with bmp4 in a non-covalent manner (By similarity).</text>
</comment>
<comment type="subcellular location">
    <subcellularLocation>
        <location evidence="5">Secreted</location>
    </subcellularLocation>
</comment>
<comment type="tissue specificity">
    <text evidence="7">Expressed in the dorsal marginal region of late blastula, becoming restricted to the dorsal blastopore lip (Spemann organizer) at the early gastrula stage.</text>
</comment>
<comment type="domain">
    <text evidence="1">The propeptide region is both necessary and sufficient for bmp-inhibitory activity. The propeptide region and the N- and C-terminal thirds of the mature protein are necessary for neural induction activity. Although cleavage doesn't appear essential for activity, residues surrounding the cleavage site are necessary for activity (By similarity).</text>
</comment>
<comment type="similarity">
    <text evidence="6">Belongs to the TGF-beta family.</text>
</comment>
<comment type="sequence caution" evidence="8">
    <conflict type="frameshift">
        <sequence resource="EMBL-CDS" id="AAC59735"/>
    </conflict>
</comment>
<protein>
    <recommendedName>
        <fullName>Nodal homolog 3-B</fullName>
    </recommendedName>
    <alternativeName>
        <fullName>Fugacin</fullName>
    </alternativeName>
    <alternativeName>
        <fullName>Nodal-related protein 3-B</fullName>
    </alternativeName>
    <alternativeName>
        <fullName>Xnr3-B</fullName>
    </alternativeName>
</protein>